<protein>
    <recommendedName>
        <fullName evidence="3">DNA polymerase delta subunit 3</fullName>
    </recommendedName>
</protein>
<gene>
    <name evidence="3" type="primary">PolD3</name>
    <name type="ORF">CTHT_0034040</name>
</gene>
<evidence type="ECO:0000250" key="1">
    <source>
        <dbReference type="UniProtKB" id="Q15054"/>
    </source>
</evidence>
<evidence type="ECO:0000256" key="2">
    <source>
        <dbReference type="SAM" id="MobiDB-lite"/>
    </source>
</evidence>
<evidence type="ECO:0000303" key="3">
    <source>
    </source>
</evidence>
<evidence type="ECO:0000305" key="4"/>
<evidence type="ECO:0000305" key="5">
    <source>
    </source>
</evidence>
<evidence type="ECO:0007829" key="6">
    <source>
        <dbReference type="PDB" id="8P9O"/>
    </source>
</evidence>
<reference key="1">
    <citation type="journal article" date="2011" name="Cell">
        <title>Insight into structure and assembly of the nuclear pore complex by utilizing the genome of a eukaryotic thermophile.</title>
        <authorList>
            <person name="Amlacher S."/>
            <person name="Sarges P."/>
            <person name="Flemming D."/>
            <person name="van Noort V."/>
            <person name="Kunze R."/>
            <person name="Devos D.P."/>
            <person name="Arumugam M."/>
            <person name="Bork P."/>
            <person name="Hurt E."/>
        </authorList>
    </citation>
    <scope>NUCLEOTIDE SEQUENCE [LARGE SCALE GENOMIC DNA]</scope>
    <source>
        <strain>DSM 1495 / CBS 144.50 / IMI 039719</strain>
    </source>
</reference>
<reference key="2">
    <citation type="submission" date="2023-03" db="EMBL/GenBank/DDBJ databases">
        <authorList>
            <person name="MacNeil S.A."/>
        </authorList>
    </citation>
    <scope>NUCLEOTIDE SEQUENCE [MRNA]</scope>
</reference>
<reference key="3">
    <citation type="journal article" date="2023" name="FEBS J.">
        <title>Non-canonical binding of the Chaetomium thermophilum PolD4 N-terminal PIP motif to PCNA involves Q-pocket and compact 2-fork plug interactions but no 310 helix.</title>
        <authorList>
            <person name="Yang D."/>
            <person name="Alphey M.S."/>
            <person name="MacNeill S.A."/>
        </authorList>
    </citation>
    <scope>IDENTIFICATION</scope>
    <scope>FUNCTION</scope>
    <scope>DOMAIN</scope>
    <scope>SUBUNIT</scope>
</reference>
<comment type="function">
    <text evidence="5">Accessory component of the DNA polymerase delta complex (Probable). The complex is required for the maintenance of genome integrity, acting in concert with the sliding clamp processivity factor PCNA (Probable).</text>
</comment>
<comment type="subunit">
    <text evidence="5">Component of the DNA polymerase delta complex which consists of PolD1, PolD2, PolD3 and PolD4, with PolD1 bearing DNA polymerase and 3' to 5' proofreading exonuclease activities (Probable). Directly interacts with PCNA (Probable).</text>
</comment>
<comment type="subcellular location">
    <subcellularLocation>
        <location evidence="4">Nucleus</location>
    </subcellularLocation>
</comment>
<comment type="domain">
    <text evidence="5">The PIP-box mediates the interaction with PCNA.</text>
</comment>
<comment type="sequence caution" evidence="4">
    <conflict type="erroneous initiation">
        <sequence resource="EMBL-CDS" id="EGS21544"/>
    </conflict>
    <text>Truncated N-terminus.</text>
</comment>
<organism>
    <name type="scientific">Chaetomium thermophilum (strain DSM 1495 / CBS 144.50 / IMI 039719)</name>
    <name type="common">Thermochaetoides thermophila</name>
    <dbReference type="NCBI Taxonomy" id="759272"/>
    <lineage>
        <taxon>Eukaryota</taxon>
        <taxon>Fungi</taxon>
        <taxon>Dikarya</taxon>
        <taxon>Ascomycota</taxon>
        <taxon>Pezizomycotina</taxon>
        <taxon>Sordariomycetes</taxon>
        <taxon>Sordariomycetidae</taxon>
        <taxon>Sordariales</taxon>
        <taxon>Chaetomiaceae</taxon>
        <taxon>Thermochaetoides</taxon>
    </lineage>
</organism>
<dbReference type="EMBL" id="GL988041">
    <property type="protein sequence ID" value="EGS21544.1"/>
    <property type="status" value="ALT_INIT"/>
    <property type="molecule type" value="Genomic_DNA"/>
</dbReference>
<dbReference type="EMBL" id="OQ605904">
    <property type="protein sequence ID" value="WEG85332.1"/>
    <property type="molecule type" value="mRNA"/>
</dbReference>
<dbReference type="RefSeq" id="XP_006693840.1">
    <property type="nucleotide sequence ID" value="XM_006693777.1"/>
</dbReference>
<dbReference type="PDB" id="8P9O">
    <property type="method" value="X-ray"/>
    <property type="resolution" value="2.45 A"/>
    <property type="chains" value="P=437-451"/>
</dbReference>
<dbReference type="PDBsum" id="8P9O"/>
<dbReference type="SMR" id="G0S636"/>
<dbReference type="STRING" id="759272.G0S636"/>
<dbReference type="GeneID" id="18257442"/>
<dbReference type="KEGG" id="cthr:CTHT_0034040"/>
<dbReference type="eggNOG" id="ENOG502S6S5">
    <property type="taxonomic scope" value="Eukaryota"/>
</dbReference>
<dbReference type="HOGENOM" id="CLU_047736_0_0_1"/>
<dbReference type="OrthoDB" id="514823at2759"/>
<dbReference type="Proteomes" id="UP000008066">
    <property type="component" value="Unassembled WGS sequence"/>
</dbReference>
<dbReference type="GO" id="GO:0043625">
    <property type="term" value="C:delta DNA polymerase complex"/>
    <property type="evidence" value="ECO:0007669"/>
    <property type="project" value="InterPro"/>
</dbReference>
<dbReference type="GO" id="GO:0003887">
    <property type="term" value="F:DNA-directed DNA polymerase activity"/>
    <property type="evidence" value="ECO:0007669"/>
    <property type="project" value="TreeGrafter"/>
</dbReference>
<dbReference type="GO" id="GO:0006271">
    <property type="term" value="P:DNA strand elongation involved in DNA replication"/>
    <property type="evidence" value="ECO:0007669"/>
    <property type="project" value="TreeGrafter"/>
</dbReference>
<dbReference type="GO" id="GO:1904161">
    <property type="term" value="P:DNA synthesis involved in UV-damage excision repair"/>
    <property type="evidence" value="ECO:0007669"/>
    <property type="project" value="TreeGrafter"/>
</dbReference>
<dbReference type="GO" id="GO:0006297">
    <property type="term" value="P:nucleotide-excision repair, DNA gap filling"/>
    <property type="evidence" value="ECO:0007669"/>
    <property type="project" value="TreeGrafter"/>
</dbReference>
<dbReference type="Gene3D" id="3.90.1030.20">
    <property type="entry name" value="DNA polymerase delta, p66 (Cdc27) subunit, wHTH domain"/>
    <property type="match status" value="1"/>
</dbReference>
<dbReference type="InterPro" id="IPR019038">
    <property type="entry name" value="POLD3"/>
</dbReference>
<dbReference type="InterPro" id="IPR041913">
    <property type="entry name" value="POLD3_sf"/>
</dbReference>
<dbReference type="PANTHER" id="PTHR17598">
    <property type="entry name" value="DNA POLYMERASE DELTA SUBUNIT 3"/>
    <property type="match status" value="1"/>
</dbReference>
<dbReference type="PANTHER" id="PTHR17598:SF13">
    <property type="entry name" value="DNA POLYMERASE DELTA SUBUNIT 3"/>
    <property type="match status" value="1"/>
</dbReference>
<dbReference type="Pfam" id="PF09507">
    <property type="entry name" value="CDC27"/>
    <property type="match status" value="1"/>
</dbReference>
<keyword id="KW-0002">3D-structure</keyword>
<keyword id="KW-0227">DNA damage</keyword>
<keyword id="KW-0234">DNA repair</keyword>
<keyword id="KW-0235">DNA replication</keyword>
<keyword id="KW-0539">Nucleus</keyword>
<keyword id="KW-1185">Reference proteome</keyword>
<feature type="chain" id="PRO_0000458244" description="DNA polymerase delta subunit 3">
    <location>
        <begin position="1"/>
        <end position="451"/>
    </location>
</feature>
<feature type="region of interest" description="Disordered" evidence="2">
    <location>
        <begin position="187"/>
        <end position="241"/>
    </location>
</feature>
<feature type="region of interest" description="Disordered" evidence="2">
    <location>
        <begin position="259"/>
        <end position="386"/>
    </location>
</feature>
<feature type="region of interest" description="Disordered" evidence="2">
    <location>
        <begin position="404"/>
        <end position="451"/>
    </location>
</feature>
<feature type="short sequence motif" description="PIP-box" evidence="1">
    <location>
        <begin position="441"/>
        <end position="448"/>
    </location>
</feature>
<feature type="compositionally biased region" description="Polar residues" evidence="2">
    <location>
        <begin position="200"/>
        <end position="216"/>
    </location>
</feature>
<feature type="compositionally biased region" description="Low complexity" evidence="2">
    <location>
        <begin position="225"/>
        <end position="241"/>
    </location>
</feature>
<feature type="compositionally biased region" description="Basic and acidic residues" evidence="2">
    <location>
        <begin position="306"/>
        <end position="316"/>
    </location>
</feature>
<feature type="compositionally biased region" description="Acidic residues" evidence="2">
    <location>
        <begin position="329"/>
        <end position="353"/>
    </location>
</feature>
<feature type="compositionally biased region" description="Basic and acidic residues" evidence="2">
    <location>
        <begin position="354"/>
        <end position="366"/>
    </location>
</feature>
<feature type="compositionally biased region" description="Basic residues" evidence="2">
    <location>
        <begin position="376"/>
        <end position="386"/>
    </location>
</feature>
<feature type="helix" evidence="6">
    <location>
        <begin position="444"/>
        <end position="446"/>
    </location>
</feature>
<proteinExistence type="evidence at protein level"/>
<sequence>MDCYTKYLAENVLSEDKVVTYRYLSRALRVHVNTAKQMLFEFHRSQNAKCPNTVHATYLVYGRKKADAEQPSALKNGDGDIEMTSSPPEAESISEAVPAYSLSLIPEDRLSDALADYDEVFSIHVYSIGPHPNKDVALLADAANATLNLESKGDVTQLRAIINPRARRREQQGAGLRAAAAAATVKSQAKSIFPKPPTAPSTSQVKEAPKASQTVEETAEKATLSAPAKKGSSAPKSAASSGGIMQAFSKAAAVSKAKKQTPALRSATPASVEESIPQPLSDDGEDDEDMPQPKPSRSSAMKTKKQREEELRRMMESDDEEEKKKKKEEEEEEEEEEEESEHEQLPAEEEPMAEEPKAPEPVKEEPAEIITATTNGRRRGKRKVLRKKQIMDEQGYLVTVTEPAWESFSEDEPPPPSKPKATSLAPATQATKPKKGGKGGQGSIMSWFAKK</sequence>
<accession>G0S636</accession>
<name>DPOD3_CHATD</name>